<gene>
    <name type="ORF">PPL_12517</name>
</gene>
<protein>
    <recommendedName>
        <fullName evidence="1">ATP-dependent (S)-NAD(P)H-hydrate dehydratase</fullName>
        <ecNumber evidence="1">4.2.1.93</ecNumber>
    </recommendedName>
    <alternativeName>
        <fullName evidence="1">ATP-dependent NAD(P)HX dehydratase</fullName>
    </alternativeName>
</protein>
<reference key="1">
    <citation type="journal article" date="2011" name="Genome Res.">
        <title>Phylogeny-wide analysis of social amoeba genomes highlights ancient origins for complex intercellular communication.</title>
        <authorList>
            <person name="Heidel A.J."/>
            <person name="Lawal H.M."/>
            <person name="Felder M."/>
            <person name="Schilde C."/>
            <person name="Helps N.R."/>
            <person name="Tunggal B."/>
            <person name="Rivero F."/>
            <person name="John U."/>
            <person name="Schleicher M."/>
            <person name="Eichinger L."/>
            <person name="Platzer M."/>
            <person name="Noegel A.A."/>
            <person name="Schaap P."/>
            <person name="Gloeckner G."/>
        </authorList>
    </citation>
    <scope>NUCLEOTIDE SEQUENCE [LARGE SCALE GENOMIC DNA]</scope>
    <source>
        <strain>ATCC 26659 / Pp 5 / PN500</strain>
    </source>
</reference>
<proteinExistence type="inferred from homology"/>
<sequence length="413" mass="45077">MFCIIHFGNPKNDKFLGSSTLYSQKLKTNNIKILCLQVFYYNIYESTNNNNNNKNKNKTLLLNNIRTYSTLSKGALSTTTTATTKKMSMDDSFELPTNLNHFLSYVPSLEYHMHKGQCGRIGVFGGSAEYTGAPFFAGITSLRLGADIVHIFAPSEGGTATAIKTLSPELIVHPLDQQMDPSTIIPWLLSIHVLIIGPGLGRSSIAWKSAKEVIKAARNINLPMVLDGDALRLICEDLELVKGYDKVILTPNFVEYRALSDAAKKLNNDNSNNILSPSDLAKALGNVVIVQKGQEDIITDGTISYSCDKAGMPRRCGGQGDVLAGVIGTFYAWTQNALKGKTSEELEHLKESIGENQSAAASAAYAGCVLVRYAAKLAFKNNRRSTITDDIIKSVPNALVWGFLTDDRGRPTI</sequence>
<organism>
    <name type="scientific">Heterostelium pallidum (strain ATCC 26659 / Pp 5 / PN500)</name>
    <name type="common">Cellular slime mold</name>
    <name type="synonym">Polysphondylium pallidum</name>
    <dbReference type="NCBI Taxonomy" id="670386"/>
    <lineage>
        <taxon>Eukaryota</taxon>
        <taxon>Amoebozoa</taxon>
        <taxon>Evosea</taxon>
        <taxon>Eumycetozoa</taxon>
        <taxon>Dictyostelia</taxon>
        <taxon>Acytosteliales</taxon>
        <taxon>Acytosteliaceae</taxon>
        <taxon>Heterostelium</taxon>
    </lineage>
</organism>
<dbReference type="EC" id="4.2.1.93" evidence="1"/>
<dbReference type="EMBL" id="ADBJ01000043">
    <property type="protein sequence ID" value="EFA77306.1"/>
    <property type="molecule type" value="Genomic_DNA"/>
</dbReference>
<dbReference type="RefSeq" id="XP_020429435.1">
    <property type="nucleotide sequence ID" value="XM_020583248.1"/>
</dbReference>
<dbReference type="SMR" id="D3BMU4"/>
<dbReference type="FunCoup" id="D3BMU4">
    <property type="interactions" value="5"/>
</dbReference>
<dbReference type="STRING" id="670386.D3BMU4"/>
<dbReference type="GeneID" id="31367984"/>
<dbReference type="InParanoid" id="D3BMU4"/>
<dbReference type="OMA" id="NIWGERD"/>
<dbReference type="Proteomes" id="UP000001396">
    <property type="component" value="Unassembled WGS sequence"/>
</dbReference>
<dbReference type="GO" id="GO:0005524">
    <property type="term" value="F:ATP binding"/>
    <property type="evidence" value="ECO:0007669"/>
    <property type="project" value="UniProtKB-KW"/>
</dbReference>
<dbReference type="GO" id="GO:0047453">
    <property type="term" value="F:ATP-dependent NAD(P)H-hydrate dehydratase activity"/>
    <property type="evidence" value="ECO:0007669"/>
    <property type="project" value="UniProtKB-UniRule"/>
</dbReference>
<dbReference type="GO" id="GO:0110051">
    <property type="term" value="P:metabolite repair"/>
    <property type="evidence" value="ECO:0007669"/>
    <property type="project" value="TreeGrafter"/>
</dbReference>
<dbReference type="GO" id="GO:0046496">
    <property type="term" value="P:nicotinamide nucleotide metabolic process"/>
    <property type="evidence" value="ECO:0007669"/>
    <property type="project" value="UniProtKB-UniRule"/>
</dbReference>
<dbReference type="CDD" id="cd01171">
    <property type="entry name" value="YXKO-related"/>
    <property type="match status" value="1"/>
</dbReference>
<dbReference type="Gene3D" id="3.40.1190.20">
    <property type="match status" value="1"/>
</dbReference>
<dbReference type="HAMAP" id="MF_01965">
    <property type="entry name" value="NADHX_dehydratase"/>
    <property type="match status" value="1"/>
</dbReference>
<dbReference type="InterPro" id="IPR017953">
    <property type="entry name" value="Carbohydrate_kinase_pred_CS"/>
</dbReference>
<dbReference type="InterPro" id="IPR000631">
    <property type="entry name" value="CARKD"/>
</dbReference>
<dbReference type="InterPro" id="IPR029056">
    <property type="entry name" value="Ribokinase-like"/>
</dbReference>
<dbReference type="NCBIfam" id="TIGR00196">
    <property type="entry name" value="yjeF_cterm"/>
    <property type="match status" value="1"/>
</dbReference>
<dbReference type="PANTHER" id="PTHR12592:SF0">
    <property type="entry name" value="ATP-DEPENDENT (S)-NAD(P)H-HYDRATE DEHYDRATASE"/>
    <property type="match status" value="1"/>
</dbReference>
<dbReference type="PANTHER" id="PTHR12592">
    <property type="entry name" value="ATP-DEPENDENT (S)-NAD(P)H-HYDRATE DEHYDRATASE FAMILY MEMBER"/>
    <property type="match status" value="1"/>
</dbReference>
<dbReference type="Pfam" id="PF01256">
    <property type="entry name" value="Carb_kinase"/>
    <property type="match status" value="1"/>
</dbReference>
<dbReference type="SUPFAM" id="SSF53613">
    <property type="entry name" value="Ribokinase-like"/>
    <property type="match status" value="1"/>
</dbReference>
<dbReference type="PROSITE" id="PS01050">
    <property type="entry name" value="YJEF_C_2"/>
    <property type="match status" value="1"/>
</dbReference>
<dbReference type="PROSITE" id="PS51383">
    <property type="entry name" value="YJEF_C_3"/>
    <property type="match status" value="1"/>
</dbReference>
<comment type="function">
    <text evidence="1">Catalyzes the dehydration of the S-form of NAD(P)HX at the expense of ATP, which is converted to ADP. Together with NAD(P)HX epimerase, which catalyzes the epimerization of the S- and R-forms, the enzyme allows the repair of both epimers of NAD(P)HX, a damaged form of NAD(P)H that is a result of enzymatic or heat-dependent hydration.</text>
</comment>
<comment type="catalytic activity">
    <reaction evidence="1">
        <text>(6S)-NADHX + ATP = ADP + phosphate + NADH + H(+)</text>
        <dbReference type="Rhea" id="RHEA:19017"/>
        <dbReference type="ChEBI" id="CHEBI:15378"/>
        <dbReference type="ChEBI" id="CHEBI:30616"/>
        <dbReference type="ChEBI" id="CHEBI:43474"/>
        <dbReference type="ChEBI" id="CHEBI:57945"/>
        <dbReference type="ChEBI" id="CHEBI:64074"/>
        <dbReference type="ChEBI" id="CHEBI:456216"/>
        <dbReference type="EC" id="4.2.1.93"/>
    </reaction>
</comment>
<comment type="catalytic activity">
    <reaction>
        <text>(6S)-NADPHX + ATP = ADP + phosphate + NADPH + H(+)</text>
        <dbReference type="Rhea" id="RHEA:32231"/>
        <dbReference type="ChEBI" id="CHEBI:15378"/>
        <dbReference type="ChEBI" id="CHEBI:30616"/>
        <dbReference type="ChEBI" id="CHEBI:43474"/>
        <dbReference type="ChEBI" id="CHEBI:57783"/>
        <dbReference type="ChEBI" id="CHEBI:64076"/>
        <dbReference type="ChEBI" id="CHEBI:456216"/>
        <dbReference type="EC" id="4.2.1.93"/>
    </reaction>
</comment>
<comment type="cofactor">
    <cofactor evidence="1">
        <name>Mg(2+)</name>
        <dbReference type="ChEBI" id="CHEBI:18420"/>
    </cofactor>
</comment>
<comment type="similarity">
    <text evidence="1">Belongs to the NnrD/CARKD family.</text>
</comment>
<name>NNRD_HETP5</name>
<accession>D3BMU4</accession>
<keyword id="KW-0067">ATP-binding</keyword>
<keyword id="KW-0456">Lyase</keyword>
<keyword id="KW-0520">NAD</keyword>
<keyword id="KW-0521">NADP</keyword>
<keyword id="KW-0547">Nucleotide-binding</keyword>
<keyword id="KW-0597">Phosphoprotein</keyword>
<keyword id="KW-1185">Reference proteome</keyword>
<feature type="chain" id="PRO_0000416171" description="ATP-dependent (S)-NAD(P)H-hydrate dehydratase">
    <location>
        <begin position="1"/>
        <end position="413"/>
    </location>
</feature>
<feature type="domain" description="YjeF C-terminal" evidence="1">
    <location>
        <begin position="98"/>
        <end position="402"/>
    </location>
</feature>
<feature type="binding site" evidence="1">
    <location>
        <position position="199"/>
    </location>
    <ligand>
        <name>(6S)-NADPHX</name>
        <dbReference type="ChEBI" id="CHEBI:64076"/>
    </ligand>
</feature>
<feature type="binding site" evidence="1">
    <location>
        <begin position="252"/>
        <end position="258"/>
    </location>
    <ligand>
        <name>(6S)-NADPHX</name>
        <dbReference type="ChEBI" id="CHEBI:64076"/>
    </ligand>
</feature>
<feature type="binding site" evidence="1">
    <location>
        <begin position="292"/>
        <end position="296"/>
    </location>
    <ligand>
        <name>ATP</name>
        <dbReference type="ChEBI" id="CHEBI:30616"/>
    </ligand>
</feature>
<feature type="binding site" evidence="1">
    <location>
        <begin position="311"/>
        <end position="320"/>
    </location>
    <ligand>
        <name>ATP</name>
        <dbReference type="ChEBI" id="CHEBI:30616"/>
    </ligand>
</feature>
<feature type="binding site" evidence="1">
    <location>
        <position position="321"/>
    </location>
    <ligand>
        <name>(6S)-NADPHX</name>
        <dbReference type="ChEBI" id="CHEBI:64076"/>
    </ligand>
</feature>
<evidence type="ECO:0000255" key="1">
    <source>
        <dbReference type="HAMAP-Rule" id="MF_03157"/>
    </source>
</evidence>